<keyword id="KW-0143">Chaperone</keyword>
<keyword id="KW-0496">Mitochondrion</keyword>
<keyword id="KW-1185">Reference proteome</keyword>
<keyword id="KW-0346">Stress response</keyword>
<evidence type="ECO:0000255" key="1">
    <source>
        <dbReference type="PROSITE-ProRule" id="PRU00116"/>
    </source>
</evidence>
<evidence type="ECO:0000255" key="2">
    <source>
        <dbReference type="PROSITE-ProRule" id="PRU00369"/>
    </source>
</evidence>
<evidence type="ECO:0000269" key="3">
    <source>
    </source>
</evidence>
<evidence type="ECO:0000303" key="4">
    <source>
    </source>
</evidence>
<evidence type="ECO:0000305" key="5"/>
<evidence type="ECO:0000305" key="6">
    <source>
    </source>
</evidence>
<evidence type="ECO:0000312" key="7">
    <source>
        <dbReference type="EMBL" id="BAD12868.1"/>
    </source>
</evidence>
<evidence type="ECO:0000312" key="8">
    <source>
        <dbReference type="EMBL" id="BAS80634.1"/>
    </source>
</evidence>
<feature type="chain" id="PRO_0000462503" description="BAG family molecular chaperone regulator 6, mitochondrial">
    <location>
        <begin position="1"/>
        <end position="213"/>
    </location>
</feature>
<feature type="domain" description="IQ" evidence="1">
    <location>
        <begin position="53"/>
        <end position="82"/>
    </location>
</feature>
<feature type="domain" description="BAG" evidence="2">
    <location>
        <begin position="75"/>
        <end position="152"/>
    </location>
</feature>
<comment type="function">
    <text evidence="3 6">Co-chaperone that regulates stress responses (Probable). Acts as a negative regulator of saline-alkaline stress tolerance (PubMed:38252225). May participate in stress response through regulating the homeostasis of iron, manganese and zinc ions (PubMed:38252225).</text>
</comment>
<comment type="subunit">
    <text evidence="3">Interacts with CAM1-1 under normal conditions (PubMed:38252225). Dissociation of the interaction when calcium-CAM1-1 binding increases under saline-alkaline stress (PubMed:38252225).</text>
</comment>
<comment type="subcellular location">
    <subcellularLocation>
        <location evidence="3">Mitochondrion</location>
    </subcellularLocation>
</comment>
<comment type="developmental stage">
    <text evidence="3">During reproductive stage, mainly expressed in leaf blades, leaf sheaths, flag leaves, internodes and panicles.</text>
</comment>
<comment type="induction">
    <text evidence="3">Induced by salt, sodium carbonate and heat stress (PubMed:38252225). Induced by abscisic acid (ABA) (PubMed:38252225).</text>
</comment>
<comment type="disruption phenotype">
    <text evidence="3">Mutant plants display enhanced saline-alkaline stress tolerance.</text>
</comment>
<gene>
    <name evidence="8" type="ordered locus">Os02g0719700</name>
    <name evidence="5" type="ordered locus">LOC_Os02g48780</name>
    <name evidence="7" type="ORF">OJ1008_D06.11</name>
</gene>
<protein>
    <recommendedName>
        <fullName evidence="5">BAG family molecular chaperone regulator 6, mitochondrial</fullName>
    </recommendedName>
    <alternativeName>
        <fullName evidence="4">Bcl-2-associated athanogene 6</fullName>
        <shortName evidence="4">OsBAG6</shortName>
    </alternativeName>
</protein>
<organism>
    <name type="scientific">Oryza sativa subsp. japonica</name>
    <name type="common">Rice</name>
    <dbReference type="NCBI Taxonomy" id="39947"/>
    <lineage>
        <taxon>Eukaryota</taxon>
        <taxon>Viridiplantae</taxon>
        <taxon>Streptophyta</taxon>
        <taxon>Embryophyta</taxon>
        <taxon>Tracheophyta</taxon>
        <taxon>Spermatophyta</taxon>
        <taxon>Magnoliopsida</taxon>
        <taxon>Liliopsida</taxon>
        <taxon>Poales</taxon>
        <taxon>Poaceae</taxon>
        <taxon>BOP clade</taxon>
        <taxon>Oryzoideae</taxon>
        <taxon>Oryzeae</taxon>
        <taxon>Oryzinae</taxon>
        <taxon>Oryza</taxon>
        <taxon>Oryza sativa</taxon>
    </lineage>
</organism>
<proteinExistence type="evidence at protein level"/>
<accession>Q6ZI01</accession>
<accession>A0A0P0VNR5</accession>
<name>BAG6_ORYSJ</name>
<reference key="1">
    <citation type="journal article" date="2005" name="Nature">
        <title>The map-based sequence of the rice genome.</title>
        <authorList>
            <consortium name="International rice genome sequencing project (IRGSP)"/>
        </authorList>
    </citation>
    <scope>NUCLEOTIDE SEQUENCE [LARGE SCALE GENOMIC DNA]</scope>
    <source>
        <strain>cv. Nipponbare</strain>
    </source>
</reference>
<reference key="2">
    <citation type="journal article" date="2008" name="Nucleic Acids Res.">
        <title>The rice annotation project database (RAP-DB): 2008 update.</title>
        <authorList>
            <consortium name="The rice annotation project (RAP)"/>
        </authorList>
    </citation>
    <scope>GENOME REANNOTATION</scope>
    <source>
        <strain>cv. Nipponbare</strain>
    </source>
</reference>
<reference key="3">
    <citation type="journal article" date="2013" name="Rice">
        <title>Improvement of the Oryza sativa Nipponbare reference genome using next generation sequence and optical map data.</title>
        <authorList>
            <person name="Kawahara Y."/>
            <person name="de la Bastide M."/>
            <person name="Hamilton J.P."/>
            <person name="Kanamori H."/>
            <person name="McCombie W.R."/>
            <person name="Ouyang S."/>
            <person name="Schwartz D.C."/>
            <person name="Tanaka T."/>
            <person name="Wu J."/>
            <person name="Zhou S."/>
            <person name="Childs K.L."/>
            <person name="Davidson R.M."/>
            <person name="Lin H."/>
            <person name="Quesada-Ocampo L."/>
            <person name="Vaillancourt B."/>
            <person name="Sakai H."/>
            <person name="Lee S.S."/>
            <person name="Kim J."/>
            <person name="Numa H."/>
            <person name="Itoh T."/>
            <person name="Buell C.R."/>
            <person name="Matsumoto T."/>
        </authorList>
    </citation>
    <scope>GENOME REANNOTATION</scope>
    <source>
        <strain>cv. Nipponbare</strain>
    </source>
</reference>
<reference key="4">
    <citation type="journal article" date="2003" name="Science">
        <title>Collection, mapping, and annotation of over 28,000 cDNA clones from japonica rice.</title>
        <authorList>
            <consortium name="The rice full-length cDNA consortium"/>
        </authorList>
    </citation>
    <scope>NUCLEOTIDE SEQUENCE [LARGE SCALE MRNA]</scope>
    <source>
        <strain>cv. Nipponbare</strain>
    </source>
</reference>
<reference key="5">
    <citation type="journal article" date="2024" name="Rice">
        <title>A mitochondrial localized chaperone regulator OsBAG6 functions in saline-alkaline stress tolerance in rice.</title>
        <authorList>
            <person name="Wang J."/>
            <person name="Ao M."/>
            <person name="Ma A."/>
            <person name="Yu J."/>
            <person name="Guo P."/>
            <person name="Huang S."/>
            <person name="Peng X."/>
            <person name="Yun D.J."/>
            <person name="Xu Z.Y."/>
        </authorList>
    </citation>
    <scope>FUNCTION</scope>
    <scope>INTERACTION WITH CAM1-1</scope>
    <scope>SUBCELLULAR LOCATION</scope>
    <scope>DEVELOPMENTAL STAGE</scope>
    <scope>INDUCTION</scope>
    <scope>DISRUPTION PHENOTYPE</scope>
    <source>
        <strain>cv. Kitaake</strain>
    </source>
</reference>
<sequence>MGSYHYTSTSHFFFAGGGEGEYSSYKGTGSTDTHRPTTVRIPVTTPGPERPPDDAAAARIQAAFRGHLVRRHAAAVRGADDEATRLERLLRRQETVDAVRGDERERARFSEALMAVLLRLDAVPGYYPAVREARRAVTRRVVGLQEVFDAVLAAPDAADTCGVPASLDQVLEGIWGESPAAPPPPPPPPPPAAVEVEEEVVRSPCWRRFFGGV</sequence>
<dbReference type="EMBL" id="AP004040">
    <property type="protein sequence ID" value="BAD12868.1"/>
    <property type="molecule type" value="Genomic_DNA"/>
</dbReference>
<dbReference type="EMBL" id="AP008208">
    <property type="protein sequence ID" value="BAF09859.1"/>
    <property type="molecule type" value="Genomic_DNA"/>
</dbReference>
<dbReference type="EMBL" id="AP014958">
    <property type="protein sequence ID" value="BAS80634.1"/>
    <property type="molecule type" value="Genomic_DNA"/>
</dbReference>
<dbReference type="EMBL" id="AK119930">
    <property type="protein sequence ID" value="BAG99816.1"/>
    <property type="molecule type" value="mRNA"/>
</dbReference>
<dbReference type="SMR" id="Q6ZI01"/>
<dbReference type="FunCoup" id="Q6ZI01">
    <property type="interactions" value="326"/>
</dbReference>
<dbReference type="STRING" id="39947.Q6ZI01"/>
<dbReference type="PaxDb" id="39947-Q6ZI01"/>
<dbReference type="EnsemblPlants" id="Os02t0719700-01">
    <property type="protein sequence ID" value="Os02t0719700-01"/>
    <property type="gene ID" value="Os02g0719700"/>
</dbReference>
<dbReference type="GeneID" id="4330543"/>
<dbReference type="Gramene" id="Os02t0719700-01">
    <property type="protein sequence ID" value="Os02t0719700-01"/>
    <property type="gene ID" value="Os02g0719700"/>
</dbReference>
<dbReference type="KEGG" id="osa:4330543"/>
<dbReference type="eggNOG" id="ENOG502S1FY">
    <property type="taxonomic scope" value="Eukaryota"/>
</dbReference>
<dbReference type="HOGENOM" id="CLU_1362096_0_0_1"/>
<dbReference type="OMA" id="SCWGRFF"/>
<dbReference type="OrthoDB" id="418637at2759"/>
<dbReference type="Proteomes" id="UP000000763">
    <property type="component" value="Chromosome 2"/>
</dbReference>
<dbReference type="Proteomes" id="UP000059680">
    <property type="component" value="Chromosome 2"/>
</dbReference>
<dbReference type="GO" id="GO:0005516">
    <property type="term" value="F:calmodulin binding"/>
    <property type="evidence" value="ECO:0007669"/>
    <property type="project" value="UniProtKB-KW"/>
</dbReference>
<dbReference type="GO" id="GO:0051087">
    <property type="term" value="F:protein-folding chaperone binding"/>
    <property type="evidence" value="ECO:0007669"/>
    <property type="project" value="InterPro"/>
</dbReference>
<dbReference type="GO" id="GO:0006457">
    <property type="term" value="P:protein folding"/>
    <property type="evidence" value="ECO:0000318"/>
    <property type="project" value="GO_Central"/>
</dbReference>
<dbReference type="Gene3D" id="1.20.58.120">
    <property type="entry name" value="BAG domain"/>
    <property type="match status" value="1"/>
</dbReference>
<dbReference type="InterPro" id="IPR040400">
    <property type="entry name" value="BAG5/6/7/8"/>
</dbReference>
<dbReference type="InterPro" id="IPR036533">
    <property type="entry name" value="BAG_dom_sf"/>
</dbReference>
<dbReference type="InterPro" id="IPR003103">
    <property type="entry name" value="BAG_domain"/>
</dbReference>
<dbReference type="InterPro" id="IPR000048">
    <property type="entry name" value="IQ_motif_EF-hand-BS"/>
</dbReference>
<dbReference type="PANTHER" id="PTHR33322">
    <property type="entry name" value="BAG DOMAIN CONTAINING PROTEIN, EXPRESSED"/>
    <property type="match status" value="1"/>
</dbReference>
<dbReference type="PANTHER" id="PTHR33322:SF8">
    <property type="entry name" value="BAG FAMILY MOLECULAR CHAPERONE REGULATOR 5, MITOCHONDRIAL"/>
    <property type="match status" value="1"/>
</dbReference>
<dbReference type="Pfam" id="PF02179">
    <property type="entry name" value="BAG"/>
    <property type="match status" value="1"/>
</dbReference>
<dbReference type="Pfam" id="PF00612">
    <property type="entry name" value="IQ"/>
    <property type="match status" value="1"/>
</dbReference>
<dbReference type="SMART" id="SM00264">
    <property type="entry name" value="BAG"/>
    <property type="match status" value="1"/>
</dbReference>
<dbReference type="SUPFAM" id="SSF63491">
    <property type="entry name" value="BAG domain"/>
    <property type="match status" value="1"/>
</dbReference>
<dbReference type="PROSITE" id="PS51035">
    <property type="entry name" value="BAG"/>
    <property type="match status" value="1"/>
</dbReference>
<dbReference type="PROSITE" id="PS50096">
    <property type="entry name" value="IQ"/>
    <property type="match status" value="1"/>
</dbReference>